<accession>Q68Y81</accession>
<protein>
    <recommendedName>
        <fullName evidence="1">Fanconi anemia group D2 protein</fullName>
        <shortName evidence="1">Protein FACD2</shortName>
    </recommendedName>
</protein>
<proteinExistence type="evidence at protein level"/>
<comment type="function">
    <text evidence="1">Required for maintenance of chromosomal stability (By similarity). Promotes accurate and efficient pairing of homologs during meiosis (By similarity). Involved in the repair of DNA double-strand breaks, both by homologous recombination and single-strand annealing (By similarity). The FANCI-FANCD2 complex binds and scans double-stranded DNA (dsDNA) for DNA damage; this complex stalls at DNA junctions between double-stranded DNA and single-stranded DNA (PubMed:32066963, PubMed:36050501, PubMed:39085614). May participate in S phase and G2 phase checkpoint activation upon DNA damage (By similarity). Plays a role in preventing breakage and loss of missegregating chromatin at the end of cell division, particularly after replication stress (By similarity). Required for the targeting, or stabilization, of BLM to non-centromeric abnormal structures induced by replicative stress (By similarity). Promotes BRCA2/FANCD1 loading onto damaged chromatin (By similarity). May also be involved in B-cell immunoglobulin isotype switching (By similarity).</text>
</comment>
<comment type="subunit">
    <text evidence="1">Homodimer; cannot be ubiquitinated and does not bind DNA (PubMed:32066963). Part of a FANCI-FANCD2 heterodimeric complex that binds and scans dsDNA for DNA damage (PubMed:32066963, PubMed:36050501, PubMed:39085614). Interacts directly with FANCE and FANCI (By similarity). Interacts with USP1 and MEN1 (By similarity). The ubiquitinated form specifically interacts with BRCA1 and BLM (By similarity). Both the nonubiquitinated and the monoubiquitinated forms interact with BRCA2; this interaction is mediated by phosphorylated FANCG and the complex also includes XCCR3 (By similarity). The ubiquitinated form specifically interacts with MTMR15/FAN1 (via UBZ-type zinc finger), leading to recruit MTMR15/FAN1 to sites of DNA damage. Interacts with DCLRE1B/Apollo (By similarity). Interacts with POLN (By similarity). Interacts with UHRF1 and UHRF2; these interactions promote FANCD2 activation (By similarity).</text>
</comment>
<comment type="interaction">
    <interactant intactId="EBI-15734282">
        <id>Q68Y81</id>
    </interactant>
    <interactant intactId="EBI-15734261">
        <id>B0I564</id>
        <label>FANCI</label>
    </interactant>
    <organismsDiffer>false</organismsDiffer>
    <experiments>4</experiments>
</comment>
<comment type="subcellular location">
    <subcellularLocation>
        <location evidence="1">Nucleus</location>
    </subcellularLocation>
    <text evidence="1">Concentrates in nuclear foci during S phase and upon genotoxic stress.</text>
</comment>
<comment type="PTM">
    <text evidence="1 2">Monoubiquitinated on Lys-563 during S phase and upon genotoxic stress (By similarity). Deubiquitinated by USP1 as cells enter G2/M, or once DNA repair is completed (By similarity). Monoubiquitination prevents DNA release from the FANCI-FANCD2 complex (PubMed:32066963). FANCD2 is only ubiquitinated in the FANCI-FANCD2 complex and the monoubiquitination of FANCD2 is promoted by phosphorylation of FANCI (PubMed:32066963).</text>
</comment>
<comment type="PTM">
    <text evidence="1">Phosphorylated in response to various genotoxic stresses by ATM and/or ATR.</text>
</comment>
<comment type="similarity">
    <text evidence="4">Belongs to the Fanconi anemia protein FANCD2 family.</text>
</comment>
<evidence type="ECO:0000250" key="1">
    <source>
        <dbReference type="UniProtKB" id="Q9BXW9"/>
    </source>
</evidence>
<evidence type="ECO:0000269" key="2">
    <source>
    </source>
</evidence>
<evidence type="ECO:0000269" key="3">
    <source>
    </source>
</evidence>
<evidence type="ECO:0000305" key="4"/>
<evidence type="ECO:0007744" key="5">
    <source>
        <dbReference type="PDB" id="6TNF"/>
    </source>
</evidence>
<evidence type="ECO:0007744" key="6">
    <source>
        <dbReference type="PDB" id="6TNG"/>
    </source>
</evidence>
<evidence type="ECO:0007744" key="7">
    <source>
        <dbReference type="PDB" id="6TNI"/>
    </source>
</evidence>
<evidence type="ECO:0007744" key="8">
    <source>
        <dbReference type="PDB" id="8A2Q"/>
    </source>
</evidence>
<evidence type="ECO:0007744" key="9">
    <source>
        <dbReference type="PDB" id="9FFB"/>
    </source>
</evidence>
<evidence type="ECO:0007744" key="10">
    <source>
        <dbReference type="PDB" id="9FFF"/>
    </source>
</evidence>
<organism>
    <name type="scientific">Gallus gallus</name>
    <name type="common">Chicken</name>
    <dbReference type="NCBI Taxonomy" id="9031"/>
    <lineage>
        <taxon>Eukaryota</taxon>
        <taxon>Metazoa</taxon>
        <taxon>Chordata</taxon>
        <taxon>Craniata</taxon>
        <taxon>Vertebrata</taxon>
        <taxon>Euteleostomi</taxon>
        <taxon>Archelosauria</taxon>
        <taxon>Archosauria</taxon>
        <taxon>Dinosauria</taxon>
        <taxon>Saurischia</taxon>
        <taxon>Theropoda</taxon>
        <taxon>Coelurosauria</taxon>
        <taxon>Aves</taxon>
        <taxon>Neognathae</taxon>
        <taxon>Galloanserae</taxon>
        <taxon>Galliformes</taxon>
        <taxon>Phasianidae</taxon>
        <taxon>Phasianinae</taxon>
        <taxon>Gallus</taxon>
    </lineage>
</organism>
<dbReference type="EMBL" id="AB162932">
    <property type="protein sequence ID" value="BAD36880.1"/>
    <property type="molecule type" value="mRNA"/>
</dbReference>
<dbReference type="PDB" id="6TNF">
    <property type="method" value="EM"/>
    <property type="resolution" value="3.80 A"/>
    <property type="chains" value="A=1-1439"/>
</dbReference>
<dbReference type="PDB" id="6TNG">
    <property type="method" value="EM"/>
    <property type="resolution" value="4.10 A"/>
    <property type="chains" value="A=1-1439"/>
</dbReference>
<dbReference type="PDB" id="6TNI">
    <property type="method" value="EM"/>
    <property type="resolution" value="3.40 A"/>
    <property type="chains" value="A=1-1439"/>
</dbReference>
<dbReference type="PDB" id="8A2Q">
    <property type="method" value="EM"/>
    <property type="resolution" value="3.53 A"/>
    <property type="chains" value="A=1-1439"/>
</dbReference>
<dbReference type="PDB" id="9FFB">
    <property type="method" value="EM"/>
    <property type="resolution" value="3.59 A"/>
    <property type="chains" value="A=1-1439"/>
</dbReference>
<dbReference type="PDB" id="9FFF">
    <property type="method" value="EM"/>
    <property type="resolution" value="3.68 A"/>
    <property type="chains" value="A=1-1439"/>
</dbReference>
<dbReference type="PDBsum" id="6TNF"/>
<dbReference type="PDBsum" id="6TNG"/>
<dbReference type="PDBsum" id="6TNI"/>
<dbReference type="PDBsum" id="8A2Q"/>
<dbReference type="PDBsum" id="9FFB"/>
<dbReference type="PDBsum" id="9FFF"/>
<dbReference type="EMDB" id="EMD-50353"/>
<dbReference type="EMDB" id="EMD-50355"/>
<dbReference type="SMR" id="Q68Y81"/>
<dbReference type="DIP" id="DIP-46356N"/>
<dbReference type="IntAct" id="Q68Y81">
    <property type="interactions" value="1"/>
</dbReference>
<dbReference type="iPTMnet" id="Q68Y81"/>
<dbReference type="VEuPathDB" id="HostDB:geneid_415935"/>
<dbReference type="PhylomeDB" id="Q68Y81"/>
<dbReference type="Reactome" id="R-GGA-351465">
    <property type="pathway name" value="Fanconi Anemia Pathway in DNA repair"/>
</dbReference>
<dbReference type="Proteomes" id="UP000000539">
    <property type="component" value="Unplaced"/>
</dbReference>
<dbReference type="GO" id="GO:0005654">
    <property type="term" value="C:nucleoplasm"/>
    <property type="evidence" value="ECO:0000304"/>
    <property type="project" value="Reactome"/>
</dbReference>
<dbReference type="GO" id="GO:0006281">
    <property type="term" value="P:DNA repair"/>
    <property type="evidence" value="ECO:0007669"/>
    <property type="project" value="InterPro"/>
</dbReference>
<dbReference type="CDD" id="cd11721">
    <property type="entry name" value="FANCD2"/>
    <property type="match status" value="1"/>
</dbReference>
<dbReference type="InterPro" id="IPR029448">
    <property type="entry name" value="FANCD2"/>
</dbReference>
<dbReference type="PANTHER" id="PTHR32086">
    <property type="entry name" value="FANCONI ANEMIA GROUP D2 PROTEIN"/>
    <property type="match status" value="1"/>
</dbReference>
<dbReference type="PANTHER" id="PTHR32086:SF0">
    <property type="entry name" value="FANCONI ANEMIA GROUP D2 PROTEIN"/>
    <property type="match status" value="1"/>
</dbReference>
<dbReference type="Pfam" id="PF14631">
    <property type="entry name" value="FancD2"/>
    <property type="match status" value="1"/>
</dbReference>
<gene>
    <name evidence="1" type="primary">FANCD2</name>
</gene>
<keyword id="KW-0002">3D-structure</keyword>
<keyword id="KW-1017">Isopeptide bond</keyword>
<keyword id="KW-0539">Nucleus</keyword>
<keyword id="KW-1185">Reference proteome</keyword>
<keyword id="KW-0832">Ubl conjugation</keyword>
<name>FACD2_CHICK</name>
<reference key="1">
    <citation type="journal article" date="2005" name="Mol. Cell. Biol.">
        <title>Fanconi anemia protein FANCD2 promotes immunoglobulin gene conversion and DNA repair through a mechanism related to homologous recombination.</title>
        <authorList>
            <person name="Yamamoto K."/>
            <person name="Hirano S."/>
            <person name="Ishiai M."/>
            <person name="Morishima K."/>
            <person name="Kitao H."/>
            <person name="Namikoshi K."/>
            <person name="Kimura M."/>
            <person name="Matsushita N."/>
            <person name="Arakawa H."/>
            <person name="Buerstedde J.M."/>
            <person name="Komatsu K."/>
            <person name="Thompson L.H."/>
            <person name="Takata M."/>
        </authorList>
    </citation>
    <scope>NUCLEOTIDE SEQUENCE [MRNA]</scope>
</reference>
<reference evidence="5 6 7" key="2">
    <citation type="journal article" date="2020" name="Nat. Struct. Mol. Biol.">
        <title>FANCD2-FANCI is a clamp stabilized on DNA by monoubiquitination of FANCD2 during DNA repair.</title>
        <authorList>
            <person name="Alcon P."/>
            <person name="Shakeel S."/>
            <person name="Chen Z.A."/>
            <person name="Rappsilber J."/>
            <person name="Patel K.J."/>
            <person name="Passmore L.A."/>
        </authorList>
    </citation>
    <scope>STRUCTURE BY ELECTRON MICROSCOPY (3.80 ANGSTROMS) WITH FANCI AND DNA</scope>
    <scope>FUNCTION</scope>
    <scope>SUBUNIT</scope>
    <scope>UBIQUITINATION AT LYS-563</scope>
</reference>
<reference evidence="8" key="3">
    <citation type="journal article" date="2022" name="Nat. Struct. Mol. Biol.">
        <title>The DNA-damage kinase ATR activates the FANCD2-FANCI clamp by priming it for ubiquitination.</title>
        <authorList>
            <person name="Sijacki T."/>
            <person name="Alcon P."/>
            <person name="Chen Z.A."/>
            <person name="McLaughlin S.H."/>
            <person name="Shakeel S."/>
            <person name="Rappsilber J."/>
            <person name="Passmore L.A."/>
        </authorList>
    </citation>
    <scope>STRUCTURE BY ELECTRON MICROSCOPY (3.53 ANGSTROMS) WITH FANCI AND DNA</scope>
    <scope>FUNCTION</scope>
    <scope>SUBUNIT</scope>
</reference>
<reference evidence="9 10" key="4">
    <citation type="journal article" date="2024" name="Nature">
        <title>FANCD2-FANCI surveys DNA and recognizes double- to single-stranded junctions.</title>
        <authorList>
            <person name="Alcon P."/>
            <person name="Kaczmarczyk A.P."/>
            <person name="Ray K.K."/>
            <person name="Liolios T."/>
            <person name="Guilbaud G."/>
            <person name="Sijacki T."/>
            <person name="Shen Y."/>
            <person name="McLaughlin S.H."/>
            <person name="Sale J.E."/>
            <person name="Knipscheer P."/>
            <person name="Rueda D.S."/>
            <person name="Passmore L.A."/>
        </authorList>
    </citation>
    <scope>STRUCTURE BY ELECTRON MICROSCOPY (3.59 ANGSTROMS) WITH FANCI AND DNA</scope>
    <scope>FUNCTION</scope>
    <scope>SUBUNIT</scope>
    <scope>INTERACTION WITH FANCI</scope>
    <scope>MUTAGENESIS OF LYS-400; LYS-404; ARG-407 AND ARG-411</scope>
</reference>
<feature type="chain" id="PRO_0000462204" description="Fanconi anemia group D2 protein">
    <location>
        <begin position="1"/>
        <end position="1439"/>
    </location>
</feature>
<feature type="cross-link" description="Glycyl lysine isopeptide (Lys-Gly) (interchain with G-Cter in ubiquitin)" evidence="2 5">
    <location>
        <position position="563"/>
    </location>
</feature>
<feature type="mutagenesis site" description="Reduces ubiquitination on FANCD2 and reduces stalling of the FANCI-FANCD2 complex at DNA junctions; when associated with E-404." evidence="3">
    <original>K</original>
    <variation>E</variation>
    <location>
        <position position="400"/>
    </location>
</feature>
<feature type="mutagenesis site" description="Reduces ubiquitination on FANCD2 and reduces stalling of the FANCI-FANCD2 complex at DNA junctions; when associated with E-400." evidence="3">
    <original>K</original>
    <variation>E</variation>
    <location>
        <position position="404"/>
    </location>
</feature>
<feature type="mutagenesis site" description="Reduces ubiquitination on FANCD2 and reduces stalling of the FANCI-FANCD2 complex at DNA junctions; when associated with E-411." evidence="3">
    <original>R</original>
    <variation>E</variation>
    <location>
        <position position="407"/>
    </location>
</feature>
<feature type="mutagenesis site" description="Reduces ubiquitination on FANCD2 and reduces stalling of the FANCI-FANCD2 complex at DNA junctions; when associated with E-407." evidence="3">
    <original>R</original>
    <variation>E</variation>
    <location>
        <position position="411"/>
    </location>
</feature>
<sequence length="1439" mass="160734">MVSKRKLSKIDAAEESSKTDLQSRCPETKRSRISDKRAPSQGGLENEGVFEELLRTSGIILKVGEGQNEIAVDQTAFQKKLRVALEKHPSYPGVVNEFISGLESHIKDRSQFKNCLLPCTPARTEGSRTLVHSYCESLIKLLLGIKILQPAVVTLLLEKIPEFFFDVVGTFGTNFPRLIVNQFKWLDGLLDSQDLVKKLMQMLSVSPVPIQHDIITSLPEILEDSQQNEVARELSCLLKQGRRLTVPILDALSRLDLDAELLAEVRQSAMTIVPSVKLEDLPVVIKFILHNVKAADAVEVISDLRKSLDLSSCVLPLQLLGSQRKLKSQAQASSSMSQVTTSQNCVKLLFDVIKQAVRFQKDVSEAWIKAIENSTSVSDHKVLDLIVLLLIHSTNSKNRKQTEKVLRSKIRLGCMPEQLMQNAFQNHSMVIKDFFPSILSLAQTFLHSAHPAVVSFGSCMYKQAFAVFDSYCQQEVVCALVTHVCSGNETELDISLDVLTDLVILHPSLLLRYATFVKTILDSMQKLNPCQIRKLFYILSTLAFSQRQEGSYIQDDMHMVIRKWLSSSVPNHKQMGIIGAVTMMGSVALKRNEADGGLLERPELSIECDGQLSTLLDLVGFCCEQTPEVLALYYDELANLIEKQKGNLDLQLLDKFGKSLVEDFPNDFVVDLSPTVDGSFLFPVKSLYNLDEDETQGAIAINLLPLVSQSEPGRVADEMSNSRKRVVSPICLSPCFRLLRLYTGEQNNGSLEEIDALLGCPLYLTDLEVEGKLDSLSKQEREFLCSLLFYALNWFREVVNAFCQQQDAEMKGKVLTRLQNITELQNVLGKCLAATPGYVPPPATFDSEAPEGVPSINAGGPVRKKNGKKRKSDSSKACSAERTQADESSDGNQPDTELSELEKSATEKETGNPLAQLQSYRPYFRELDLEVFSVLHCGLLTKSILDTEMHTEASEVVQLGPAELCFLLDDMCWKLEHVLTPGSTRRVPFLKERGNKDVGFSHLCQRSPKEVAVCVVKLLKPLCNHMENMHNYFQTVIPNQGVVDESGLNIQEYQLMSSCYHQLLLAFRLLFAWSGFSQHENSNLLRSALQVLADRLKPGETEFLPLEELISESFQYLLNFQASIPSFQCAFILTQVLMAISEKPMTGWKREKMASLAKQFLCQSWMKPGGDREKGSHFNSALHTLLCVYLEHTDNILKAIEEISSVGVPELINSAKDGCSSTYPTLSRQTFPVFFRVMMAQLESSVKSIPAGKPSDSGEVQLEKLLKWNIAVRNFHILINLVKVFDSRPVLSICLKYGRLFVEAFLKLAMPLLDHSFKKHRDDVQSLLKTLQLSTRQLHHMCGHSKIHQDLGLTNHVPLLKKSLEQFVYRVKAMLAFNHCQEAFWVGVLKNRDLQGEEILSQASAAPEEDSAEGSEEDTADSAAEEPDGTDSDSGGAGR</sequence>